<organism>
    <name type="scientific">Gloeobacter violaceus (strain ATCC 29082 / PCC 7421)</name>
    <dbReference type="NCBI Taxonomy" id="251221"/>
    <lineage>
        <taxon>Bacteria</taxon>
        <taxon>Bacillati</taxon>
        <taxon>Cyanobacteriota</taxon>
        <taxon>Cyanophyceae</taxon>
        <taxon>Gloeobacterales</taxon>
        <taxon>Gloeobacteraceae</taxon>
        <taxon>Gloeobacter</taxon>
    </lineage>
</organism>
<dbReference type="EC" id="1.2.1.41" evidence="1"/>
<dbReference type="EMBL" id="BA000045">
    <property type="protein sequence ID" value="BAC91864.1"/>
    <property type="molecule type" value="Genomic_DNA"/>
</dbReference>
<dbReference type="RefSeq" id="NP_926869.1">
    <property type="nucleotide sequence ID" value="NC_005125.1"/>
</dbReference>
<dbReference type="RefSeq" id="WP_011143911.1">
    <property type="nucleotide sequence ID" value="NC_005125.1"/>
</dbReference>
<dbReference type="SMR" id="Q7NEF6"/>
<dbReference type="FunCoup" id="Q7NEF6">
    <property type="interactions" value="280"/>
</dbReference>
<dbReference type="STRING" id="251221.gene:10761440"/>
<dbReference type="EnsemblBacteria" id="BAC91864">
    <property type="protein sequence ID" value="BAC91864"/>
    <property type="gene ID" value="BAC91864"/>
</dbReference>
<dbReference type="KEGG" id="gvi:gll3923"/>
<dbReference type="PATRIC" id="fig|251221.4.peg.3956"/>
<dbReference type="eggNOG" id="COG0014">
    <property type="taxonomic scope" value="Bacteria"/>
</dbReference>
<dbReference type="HOGENOM" id="CLU_030231_0_0_3"/>
<dbReference type="InParanoid" id="Q7NEF6"/>
<dbReference type="OrthoDB" id="9809970at2"/>
<dbReference type="PhylomeDB" id="Q7NEF6"/>
<dbReference type="UniPathway" id="UPA00098">
    <property type="reaction ID" value="UER00360"/>
</dbReference>
<dbReference type="Proteomes" id="UP000000557">
    <property type="component" value="Chromosome"/>
</dbReference>
<dbReference type="GO" id="GO:0005737">
    <property type="term" value="C:cytoplasm"/>
    <property type="evidence" value="ECO:0007669"/>
    <property type="project" value="UniProtKB-SubCell"/>
</dbReference>
<dbReference type="GO" id="GO:0004350">
    <property type="term" value="F:glutamate-5-semialdehyde dehydrogenase activity"/>
    <property type="evidence" value="ECO:0000318"/>
    <property type="project" value="GO_Central"/>
</dbReference>
<dbReference type="GO" id="GO:0050661">
    <property type="term" value="F:NADP binding"/>
    <property type="evidence" value="ECO:0007669"/>
    <property type="project" value="InterPro"/>
</dbReference>
<dbReference type="GO" id="GO:0055129">
    <property type="term" value="P:L-proline biosynthetic process"/>
    <property type="evidence" value="ECO:0007669"/>
    <property type="project" value="UniProtKB-UniRule"/>
</dbReference>
<dbReference type="CDD" id="cd07079">
    <property type="entry name" value="ALDH_F18-19_ProA-GPR"/>
    <property type="match status" value="1"/>
</dbReference>
<dbReference type="FunFam" id="3.40.309.10:FF:000006">
    <property type="entry name" value="Gamma-glutamyl phosphate reductase"/>
    <property type="match status" value="1"/>
</dbReference>
<dbReference type="Gene3D" id="3.40.605.10">
    <property type="entry name" value="Aldehyde Dehydrogenase, Chain A, domain 1"/>
    <property type="match status" value="1"/>
</dbReference>
<dbReference type="Gene3D" id="3.40.309.10">
    <property type="entry name" value="Aldehyde Dehydrogenase, Chain A, domain 2"/>
    <property type="match status" value="1"/>
</dbReference>
<dbReference type="HAMAP" id="MF_00412">
    <property type="entry name" value="ProA"/>
    <property type="match status" value="1"/>
</dbReference>
<dbReference type="InterPro" id="IPR016161">
    <property type="entry name" value="Ald_DH/histidinol_DH"/>
</dbReference>
<dbReference type="InterPro" id="IPR016163">
    <property type="entry name" value="Ald_DH_C"/>
</dbReference>
<dbReference type="InterPro" id="IPR016162">
    <property type="entry name" value="Ald_DH_N"/>
</dbReference>
<dbReference type="InterPro" id="IPR015590">
    <property type="entry name" value="Aldehyde_DH_dom"/>
</dbReference>
<dbReference type="InterPro" id="IPR020593">
    <property type="entry name" value="G-glutamylP_reductase_CS"/>
</dbReference>
<dbReference type="InterPro" id="IPR012134">
    <property type="entry name" value="Glu-5-SA_DH"/>
</dbReference>
<dbReference type="InterPro" id="IPR000965">
    <property type="entry name" value="GPR_dom"/>
</dbReference>
<dbReference type="NCBIfam" id="NF001221">
    <property type="entry name" value="PRK00197.1"/>
    <property type="match status" value="1"/>
</dbReference>
<dbReference type="NCBIfam" id="TIGR00407">
    <property type="entry name" value="proA"/>
    <property type="match status" value="1"/>
</dbReference>
<dbReference type="PANTHER" id="PTHR11063:SF8">
    <property type="entry name" value="DELTA-1-PYRROLINE-5-CARBOXYLATE SYNTHASE"/>
    <property type="match status" value="1"/>
</dbReference>
<dbReference type="PANTHER" id="PTHR11063">
    <property type="entry name" value="GLUTAMATE SEMIALDEHYDE DEHYDROGENASE"/>
    <property type="match status" value="1"/>
</dbReference>
<dbReference type="Pfam" id="PF00171">
    <property type="entry name" value="Aldedh"/>
    <property type="match status" value="2"/>
</dbReference>
<dbReference type="PIRSF" id="PIRSF000151">
    <property type="entry name" value="GPR"/>
    <property type="match status" value="1"/>
</dbReference>
<dbReference type="SUPFAM" id="SSF53720">
    <property type="entry name" value="ALDH-like"/>
    <property type="match status" value="1"/>
</dbReference>
<dbReference type="PROSITE" id="PS01223">
    <property type="entry name" value="PROA"/>
    <property type="match status" value="1"/>
</dbReference>
<comment type="function">
    <text evidence="1">Catalyzes the NADPH-dependent reduction of L-glutamate 5-phosphate into L-glutamate 5-semialdehyde and phosphate. The product spontaneously undergoes cyclization to form 1-pyrroline-5-carboxylate.</text>
</comment>
<comment type="catalytic activity">
    <reaction evidence="1">
        <text>L-glutamate 5-semialdehyde + phosphate + NADP(+) = L-glutamyl 5-phosphate + NADPH + H(+)</text>
        <dbReference type="Rhea" id="RHEA:19541"/>
        <dbReference type="ChEBI" id="CHEBI:15378"/>
        <dbReference type="ChEBI" id="CHEBI:43474"/>
        <dbReference type="ChEBI" id="CHEBI:57783"/>
        <dbReference type="ChEBI" id="CHEBI:58066"/>
        <dbReference type="ChEBI" id="CHEBI:58274"/>
        <dbReference type="ChEBI" id="CHEBI:58349"/>
        <dbReference type="EC" id="1.2.1.41"/>
    </reaction>
</comment>
<comment type="pathway">
    <text evidence="1">Amino-acid biosynthesis; L-proline biosynthesis; L-glutamate 5-semialdehyde from L-glutamate: step 2/2.</text>
</comment>
<comment type="subcellular location">
    <subcellularLocation>
        <location evidence="1">Cytoplasm</location>
    </subcellularLocation>
</comment>
<comment type="similarity">
    <text evidence="1">Belongs to the gamma-glutamyl phosphate reductase family.</text>
</comment>
<gene>
    <name evidence="1" type="primary">proA</name>
    <name type="ordered locus">gll3923</name>
</gene>
<evidence type="ECO:0000255" key="1">
    <source>
        <dbReference type="HAMAP-Rule" id="MF_00412"/>
    </source>
</evidence>
<reference key="1">
    <citation type="journal article" date="2003" name="DNA Res.">
        <title>Complete genome structure of Gloeobacter violaceus PCC 7421, a cyanobacterium that lacks thylakoids.</title>
        <authorList>
            <person name="Nakamura Y."/>
            <person name="Kaneko T."/>
            <person name="Sato S."/>
            <person name="Mimuro M."/>
            <person name="Miyashita H."/>
            <person name="Tsuchiya T."/>
            <person name="Sasamoto S."/>
            <person name="Watanabe A."/>
            <person name="Kawashima K."/>
            <person name="Kishida Y."/>
            <person name="Kiyokawa C."/>
            <person name="Kohara M."/>
            <person name="Matsumoto M."/>
            <person name="Matsuno A."/>
            <person name="Nakazaki N."/>
            <person name="Shimpo S."/>
            <person name="Takeuchi C."/>
            <person name="Yamada M."/>
            <person name="Tabata S."/>
        </authorList>
    </citation>
    <scope>NUCLEOTIDE SEQUENCE [LARGE SCALE GENOMIC DNA]</scope>
    <source>
        <strain>ATCC 29082 / PCC 7421</strain>
    </source>
</reference>
<feature type="chain" id="PRO_0000189730" description="Gamma-glutamyl phosphate reductase">
    <location>
        <begin position="1"/>
        <end position="419"/>
    </location>
</feature>
<protein>
    <recommendedName>
        <fullName evidence="1">Gamma-glutamyl phosphate reductase</fullName>
        <shortName evidence="1">GPR</shortName>
        <ecNumber evidence="1">1.2.1.41</ecNumber>
    </recommendedName>
    <alternativeName>
        <fullName evidence="1">Glutamate-5-semialdehyde dehydrogenase</fullName>
    </alternativeName>
    <alternativeName>
        <fullName evidence="1">Glutamyl-gamma-semialdehyde dehydrogenase</fullName>
        <shortName evidence="1">GSA dehydrogenase</shortName>
    </alternativeName>
</protein>
<keyword id="KW-0028">Amino-acid biosynthesis</keyword>
<keyword id="KW-0963">Cytoplasm</keyword>
<keyword id="KW-0521">NADP</keyword>
<keyword id="KW-0560">Oxidoreductase</keyword>
<keyword id="KW-0641">Proline biosynthesis</keyword>
<keyword id="KW-1185">Reference proteome</keyword>
<name>PROA_GLOVI</name>
<accession>Q7NEF6</accession>
<proteinExistence type="inferred from homology"/>
<sequence>MESSLYETLKVTAQRAQRSTMALAQVPSGIKNKALRAMARSLRTAHSEILESNTTDLEFGRQMGLSETLLDRLKLTPQRLEGMALSLEQIAALKDPVGEIVGGWRHPEGLEIVRVRVPLGLIGIIYEARPNVTADAIGLCLKSGNGVLLKGGKEAENSNQAISSVLKAAAYEQGIPEGCIEQLPGERAVVEALIRLNPYLALVIPRGGHSLIDFVVRNATVPVLETGVGNCHIYVAASADLEMARRIVINAKVQRPSVCNAAEKLLVHRDTVVTHLAPLLEDLHAHGIEVRGCPRTVAFDPKVKSAGEEDWGKEYLDKIIAIKVVDSTREAIDWINHYGTRHSEAIVTANYEEARRFTAAIDAAAVYVNASTRFTDGGEFGFGAEIGISTQKLHARGPVGLVELTTTKYVVSGSGQIRP</sequence>